<organism>
    <name type="scientific">Homo sapiens</name>
    <name type="common">Human</name>
    <dbReference type="NCBI Taxonomy" id="9606"/>
    <lineage>
        <taxon>Eukaryota</taxon>
        <taxon>Metazoa</taxon>
        <taxon>Chordata</taxon>
        <taxon>Craniata</taxon>
        <taxon>Vertebrata</taxon>
        <taxon>Euteleostomi</taxon>
        <taxon>Mammalia</taxon>
        <taxon>Eutheria</taxon>
        <taxon>Euarchontoglires</taxon>
        <taxon>Primates</taxon>
        <taxon>Haplorrhini</taxon>
        <taxon>Catarrhini</taxon>
        <taxon>Hominidae</taxon>
        <taxon>Homo</taxon>
    </lineage>
</organism>
<keyword id="KW-0029">Amino-acid transport</keyword>
<keyword id="KW-1003">Cell membrane</keyword>
<keyword id="KW-0325">Glycoprotein</keyword>
<keyword id="KW-0472">Membrane</keyword>
<keyword id="KW-0597">Phosphoprotein</keyword>
<keyword id="KW-1267">Proteomics identification</keyword>
<keyword id="KW-1185">Reference proteome</keyword>
<keyword id="KW-0812">Transmembrane</keyword>
<keyword id="KW-1133">Transmembrane helix</keyword>
<keyword id="KW-0813">Transport</keyword>
<proteinExistence type="evidence at protein level"/>
<comment type="function">
    <text evidence="2">Uniporter that mediates the uptake of cationic L-amino acids such as L-arginine, L-lysine and L-ornithine (PubMed:11591158). The transport is sodium ions- and pH-independent, moderately trans-stimulated and is mediated by passive diffusion (PubMed:11591158).</text>
</comment>
<comment type="catalytic activity">
    <reaction evidence="2">
        <text>L-arginine(in) = L-arginine(out)</text>
        <dbReference type="Rhea" id="RHEA:32143"/>
        <dbReference type="ChEBI" id="CHEBI:32682"/>
    </reaction>
</comment>
<comment type="catalytic activity">
    <reaction evidence="2">
        <text>L-lysine(in) = L-lysine(out)</text>
        <dbReference type="Rhea" id="RHEA:70935"/>
        <dbReference type="ChEBI" id="CHEBI:32551"/>
    </reaction>
</comment>
<comment type="catalytic activity">
    <reaction evidence="2">
        <text>L-ornithine(in) = L-ornithine(out)</text>
        <dbReference type="Rhea" id="RHEA:71199"/>
        <dbReference type="ChEBI" id="CHEBI:46911"/>
    </reaction>
</comment>
<comment type="interaction">
    <interactant intactId="EBI-13066314">
        <id>Q8WY07</id>
    </interactant>
    <interactant intactId="EBI-3923031">
        <id>Q14973</id>
        <label>SLC10A1</label>
    </interactant>
    <organismsDiffer>false</organismsDiffer>
    <experiments>3</experiments>
</comment>
<comment type="interaction">
    <interactant intactId="EBI-13066314">
        <id>Q8WY07</id>
    </interactant>
    <interactant intactId="EBI-10982110">
        <id>Q96Q45-2</id>
        <label>TMEM237</label>
    </interactant>
    <organismsDiffer>false</organismsDiffer>
    <experiments>3</experiments>
</comment>
<comment type="subcellular location">
    <subcellularLocation>
        <location>Cell membrane</location>
        <topology>Multi-pass membrane protein</topology>
    </subcellularLocation>
</comment>
<comment type="tissue specificity">
    <text evidence="2">Highly expressed in thymus, uterus and testis (PubMed:11591158). Detected at lower levels in brain, mammary gland, prostate, salivary gland and fetal spleen (PubMed:11591158). In brain, highest expression in thalamus, hippocampus and amygdala (PubMed:11591158).</text>
</comment>
<comment type="PTM">
    <text evidence="2">N-glycosylated.</text>
</comment>
<comment type="similarity">
    <text evidence="5">Belongs to the amino acid-polyamine-organocation (APC) superfamily. Cationic amino acid transporter (CAT) (TC 2.A.3.3) family.</text>
</comment>
<comment type="sequence caution" evidence="5">
    <conflict type="erroneous initiation">
        <sequence resource="EMBL-CDS" id="BAB55118"/>
    </conflict>
    <text>Truncated N-terminus.</text>
</comment>
<gene>
    <name evidence="6" type="primary">SLC7A3</name>
    <name type="synonym">ATRC3</name>
    <name type="synonym">CAT3</name>
</gene>
<reference key="1">
    <citation type="journal article" date="2001" name="Biochemistry">
        <title>Human cationic amino acid transporter hCAT-3 is preferentially expressed in peripheral tissues.</title>
        <authorList>
            <person name="Vekony N."/>
            <person name="Wolf S."/>
            <person name="Boissel J.-P."/>
            <person name="Gnauert K."/>
            <person name="Closs E.I."/>
        </authorList>
    </citation>
    <scope>NUCLEOTIDE SEQUENCE [MRNA]</scope>
    <scope>FUNCTION</scope>
    <scope>TRANSPORTER ACTIVITY</scope>
    <scope>GLYCOSYLATION</scope>
    <scope>TISSUE SPECIFICITY</scope>
    <source>
        <tissue>Teratocarcinoma</tissue>
    </source>
</reference>
<reference key="2">
    <citation type="journal article" date="2004" name="Nat. Genet.">
        <title>Complete sequencing and characterization of 21,243 full-length human cDNAs.</title>
        <authorList>
            <person name="Ota T."/>
            <person name="Suzuki Y."/>
            <person name="Nishikawa T."/>
            <person name="Otsuki T."/>
            <person name="Sugiyama T."/>
            <person name="Irie R."/>
            <person name="Wakamatsu A."/>
            <person name="Hayashi K."/>
            <person name="Sato H."/>
            <person name="Nagai K."/>
            <person name="Kimura K."/>
            <person name="Makita H."/>
            <person name="Sekine M."/>
            <person name="Obayashi M."/>
            <person name="Nishi T."/>
            <person name="Shibahara T."/>
            <person name="Tanaka T."/>
            <person name="Ishii S."/>
            <person name="Yamamoto J."/>
            <person name="Saito K."/>
            <person name="Kawai Y."/>
            <person name="Isono Y."/>
            <person name="Nakamura Y."/>
            <person name="Nagahari K."/>
            <person name="Murakami K."/>
            <person name="Yasuda T."/>
            <person name="Iwayanagi T."/>
            <person name="Wagatsuma M."/>
            <person name="Shiratori A."/>
            <person name="Sudo H."/>
            <person name="Hosoiri T."/>
            <person name="Kaku Y."/>
            <person name="Kodaira H."/>
            <person name="Kondo H."/>
            <person name="Sugawara M."/>
            <person name="Takahashi M."/>
            <person name="Kanda K."/>
            <person name="Yokoi T."/>
            <person name="Furuya T."/>
            <person name="Kikkawa E."/>
            <person name="Omura Y."/>
            <person name="Abe K."/>
            <person name="Kamihara K."/>
            <person name="Katsuta N."/>
            <person name="Sato K."/>
            <person name="Tanikawa M."/>
            <person name="Yamazaki M."/>
            <person name="Ninomiya K."/>
            <person name="Ishibashi T."/>
            <person name="Yamashita H."/>
            <person name="Murakawa K."/>
            <person name="Fujimori K."/>
            <person name="Tanai H."/>
            <person name="Kimata M."/>
            <person name="Watanabe M."/>
            <person name="Hiraoka S."/>
            <person name="Chiba Y."/>
            <person name="Ishida S."/>
            <person name="Ono Y."/>
            <person name="Takiguchi S."/>
            <person name="Watanabe S."/>
            <person name="Yosida M."/>
            <person name="Hotuta T."/>
            <person name="Kusano J."/>
            <person name="Kanehori K."/>
            <person name="Takahashi-Fujii A."/>
            <person name="Hara H."/>
            <person name="Tanase T.-O."/>
            <person name="Nomura Y."/>
            <person name="Togiya S."/>
            <person name="Komai F."/>
            <person name="Hara R."/>
            <person name="Takeuchi K."/>
            <person name="Arita M."/>
            <person name="Imose N."/>
            <person name="Musashino K."/>
            <person name="Yuuki H."/>
            <person name="Oshima A."/>
            <person name="Sasaki N."/>
            <person name="Aotsuka S."/>
            <person name="Yoshikawa Y."/>
            <person name="Matsunawa H."/>
            <person name="Ichihara T."/>
            <person name="Shiohata N."/>
            <person name="Sano S."/>
            <person name="Moriya S."/>
            <person name="Momiyama H."/>
            <person name="Satoh N."/>
            <person name="Takami S."/>
            <person name="Terashima Y."/>
            <person name="Suzuki O."/>
            <person name="Nakagawa S."/>
            <person name="Senoh A."/>
            <person name="Mizoguchi H."/>
            <person name="Goto Y."/>
            <person name="Shimizu F."/>
            <person name="Wakebe H."/>
            <person name="Hishigaki H."/>
            <person name="Watanabe T."/>
            <person name="Sugiyama A."/>
            <person name="Takemoto M."/>
            <person name="Kawakami B."/>
            <person name="Yamazaki M."/>
            <person name="Watanabe K."/>
            <person name="Kumagai A."/>
            <person name="Itakura S."/>
            <person name="Fukuzumi Y."/>
            <person name="Fujimori Y."/>
            <person name="Komiyama M."/>
            <person name="Tashiro H."/>
            <person name="Tanigami A."/>
            <person name="Fujiwara T."/>
            <person name="Ono T."/>
            <person name="Yamada K."/>
            <person name="Fujii Y."/>
            <person name="Ozaki K."/>
            <person name="Hirao M."/>
            <person name="Ohmori Y."/>
            <person name="Kawabata A."/>
            <person name="Hikiji T."/>
            <person name="Kobatake N."/>
            <person name="Inagaki H."/>
            <person name="Ikema Y."/>
            <person name="Okamoto S."/>
            <person name="Okitani R."/>
            <person name="Kawakami T."/>
            <person name="Noguchi S."/>
            <person name="Itoh T."/>
            <person name="Shigeta K."/>
            <person name="Senba T."/>
            <person name="Matsumura K."/>
            <person name="Nakajima Y."/>
            <person name="Mizuno T."/>
            <person name="Morinaga M."/>
            <person name="Sasaki M."/>
            <person name="Togashi T."/>
            <person name="Oyama M."/>
            <person name="Hata H."/>
            <person name="Watanabe M."/>
            <person name="Komatsu T."/>
            <person name="Mizushima-Sugano J."/>
            <person name="Satoh T."/>
            <person name="Shirai Y."/>
            <person name="Takahashi Y."/>
            <person name="Nakagawa K."/>
            <person name="Okumura K."/>
            <person name="Nagase T."/>
            <person name="Nomura N."/>
            <person name="Kikuchi H."/>
            <person name="Masuho Y."/>
            <person name="Yamashita R."/>
            <person name="Nakai K."/>
            <person name="Yada T."/>
            <person name="Nakamura Y."/>
            <person name="Ohara O."/>
            <person name="Isogai T."/>
            <person name="Sugano S."/>
        </authorList>
    </citation>
    <scope>NUCLEOTIDE SEQUENCE [LARGE SCALE MRNA]</scope>
</reference>
<reference key="3">
    <citation type="journal article" date="2005" name="Nature">
        <title>The DNA sequence of the human X chromosome.</title>
        <authorList>
            <person name="Ross M.T."/>
            <person name="Grafham D.V."/>
            <person name="Coffey A.J."/>
            <person name="Scherer S."/>
            <person name="McLay K."/>
            <person name="Muzny D."/>
            <person name="Platzer M."/>
            <person name="Howell G.R."/>
            <person name="Burrows C."/>
            <person name="Bird C.P."/>
            <person name="Frankish A."/>
            <person name="Lovell F.L."/>
            <person name="Howe K.L."/>
            <person name="Ashurst J.L."/>
            <person name="Fulton R.S."/>
            <person name="Sudbrak R."/>
            <person name="Wen G."/>
            <person name="Jones M.C."/>
            <person name="Hurles M.E."/>
            <person name="Andrews T.D."/>
            <person name="Scott C.E."/>
            <person name="Searle S."/>
            <person name="Ramser J."/>
            <person name="Whittaker A."/>
            <person name="Deadman R."/>
            <person name="Carter N.P."/>
            <person name="Hunt S.E."/>
            <person name="Chen R."/>
            <person name="Cree A."/>
            <person name="Gunaratne P."/>
            <person name="Havlak P."/>
            <person name="Hodgson A."/>
            <person name="Metzker M.L."/>
            <person name="Richards S."/>
            <person name="Scott G."/>
            <person name="Steffen D."/>
            <person name="Sodergren E."/>
            <person name="Wheeler D.A."/>
            <person name="Worley K.C."/>
            <person name="Ainscough R."/>
            <person name="Ambrose K.D."/>
            <person name="Ansari-Lari M.A."/>
            <person name="Aradhya S."/>
            <person name="Ashwell R.I."/>
            <person name="Babbage A.K."/>
            <person name="Bagguley C.L."/>
            <person name="Ballabio A."/>
            <person name="Banerjee R."/>
            <person name="Barker G.E."/>
            <person name="Barlow K.F."/>
            <person name="Barrett I.P."/>
            <person name="Bates K.N."/>
            <person name="Beare D.M."/>
            <person name="Beasley H."/>
            <person name="Beasley O."/>
            <person name="Beck A."/>
            <person name="Bethel G."/>
            <person name="Blechschmidt K."/>
            <person name="Brady N."/>
            <person name="Bray-Allen S."/>
            <person name="Bridgeman A.M."/>
            <person name="Brown A.J."/>
            <person name="Brown M.J."/>
            <person name="Bonnin D."/>
            <person name="Bruford E.A."/>
            <person name="Buhay C."/>
            <person name="Burch P."/>
            <person name="Burford D."/>
            <person name="Burgess J."/>
            <person name="Burrill W."/>
            <person name="Burton J."/>
            <person name="Bye J.M."/>
            <person name="Carder C."/>
            <person name="Carrel L."/>
            <person name="Chako J."/>
            <person name="Chapman J.C."/>
            <person name="Chavez D."/>
            <person name="Chen E."/>
            <person name="Chen G."/>
            <person name="Chen Y."/>
            <person name="Chen Z."/>
            <person name="Chinault C."/>
            <person name="Ciccodicola A."/>
            <person name="Clark S.Y."/>
            <person name="Clarke G."/>
            <person name="Clee C.M."/>
            <person name="Clegg S."/>
            <person name="Clerc-Blankenburg K."/>
            <person name="Clifford K."/>
            <person name="Cobley V."/>
            <person name="Cole C.G."/>
            <person name="Conquer J.S."/>
            <person name="Corby N."/>
            <person name="Connor R.E."/>
            <person name="David R."/>
            <person name="Davies J."/>
            <person name="Davis C."/>
            <person name="Davis J."/>
            <person name="Delgado O."/>
            <person name="Deshazo D."/>
            <person name="Dhami P."/>
            <person name="Ding Y."/>
            <person name="Dinh H."/>
            <person name="Dodsworth S."/>
            <person name="Draper H."/>
            <person name="Dugan-Rocha S."/>
            <person name="Dunham A."/>
            <person name="Dunn M."/>
            <person name="Durbin K.J."/>
            <person name="Dutta I."/>
            <person name="Eades T."/>
            <person name="Ellwood M."/>
            <person name="Emery-Cohen A."/>
            <person name="Errington H."/>
            <person name="Evans K.L."/>
            <person name="Faulkner L."/>
            <person name="Francis F."/>
            <person name="Frankland J."/>
            <person name="Fraser A.E."/>
            <person name="Galgoczy P."/>
            <person name="Gilbert J."/>
            <person name="Gill R."/>
            <person name="Gloeckner G."/>
            <person name="Gregory S.G."/>
            <person name="Gribble S."/>
            <person name="Griffiths C."/>
            <person name="Grocock R."/>
            <person name="Gu Y."/>
            <person name="Gwilliam R."/>
            <person name="Hamilton C."/>
            <person name="Hart E.A."/>
            <person name="Hawes A."/>
            <person name="Heath P.D."/>
            <person name="Heitmann K."/>
            <person name="Hennig S."/>
            <person name="Hernandez J."/>
            <person name="Hinzmann B."/>
            <person name="Ho S."/>
            <person name="Hoffs M."/>
            <person name="Howden P.J."/>
            <person name="Huckle E.J."/>
            <person name="Hume J."/>
            <person name="Hunt P.J."/>
            <person name="Hunt A.R."/>
            <person name="Isherwood J."/>
            <person name="Jacob L."/>
            <person name="Johnson D."/>
            <person name="Jones S."/>
            <person name="de Jong P.J."/>
            <person name="Joseph S.S."/>
            <person name="Keenan S."/>
            <person name="Kelly S."/>
            <person name="Kershaw J.K."/>
            <person name="Khan Z."/>
            <person name="Kioschis P."/>
            <person name="Klages S."/>
            <person name="Knights A.J."/>
            <person name="Kosiura A."/>
            <person name="Kovar-Smith C."/>
            <person name="Laird G.K."/>
            <person name="Langford C."/>
            <person name="Lawlor S."/>
            <person name="Leversha M."/>
            <person name="Lewis L."/>
            <person name="Liu W."/>
            <person name="Lloyd C."/>
            <person name="Lloyd D.M."/>
            <person name="Loulseged H."/>
            <person name="Loveland J.E."/>
            <person name="Lovell J.D."/>
            <person name="Lozado R."/>
            <person name="Lu J."/>
            <person name="Lyne R."/>
            <person name="Ma J."/>
            <person name="Maheshwari M."/>
            <person name="Matthews L.H."/>
            <person name="McDowall J."/>
            <person name="McLaren S."/>
            <person name="McMurray A."/>
            <person name="Meidl P."/>
            <person name="Meitinger T."/>
            <person name="Milne S."/>
            <person name="Miner G."/>
            <person name="Mistry S.L."/>
            <person name="Morgan M."/>
            <person name="Morris S."/>
            <person name="Mueller I."/>
            <person name="Mullikin J.C."/>
            <person name="Nguyen N."/>
            <person name="Nordsiek G."/>
            <person name="Nyakatura G."/>
            <person name="O'dell C.N."/>
            <person name="Okwuonu G."/>
            <person name="Palmer S."/>
            <person name="Pandian R."/>
            <person name="Parker D."/>
            <person name="Parrish J."/>
            <person name="Pasternak S."/>
            <person name="Patel D."/>
            <person name="Pearce A.V."/>
            <person name="Pearson D.M."/>
            <person name="Pelan S.E."/>
            <person name="Perez L."/>
            <person name="Porter K.M."/>
            <person name="Ramsey Y."/>
            <person name="Reichwald K."/>
            <person name="Rhodes S."/>
            <person name="Ridler K.A."/>
            <person name="Schlessinger D."/>
            <person name="Schueler M.G."/>
            <person name="Sehra H.K."/>
            <person name="Shaw-Smith C."/>
            <person name="Shen H."/>
            <person name="Sheridan E.M."/>
            <person name="Shownkeen R."/>
            <person name="Skuce C.D."/>
            <person name="Smith M.L."/>
            <person name="Sotheran E.C."/>
            <person name="Steingruber H.E."/>
            <person name="Steward C.A."/>
            <person name="Storey R."/>
            <person name="Swann R.M."/>
            <person name="Swarbreck D."/>
            <person name="Tabor P.E."/>
            <person name="Taudien S."/>
            <person name="Taylor T."/>
            <person name="Teague B."/>
            <person name="Thomas K."/>
            <person name="Thorpe A."/>
            <person name="Timms K."/>
            <person name="Tracey A."/>
            <person name="Trevanion S."/>
            <person name="Tromans A.C."/>
            <person name="d'Urso M."/>
            <person name="Verduzco D."/>
            <person name="Villasana D."/>
            <person name="Waldron L."/>
            <person name="Wall M."/>
            <person name="Wang Q."/>
            <person name="Warren J."/>
            <person name="Warry G.L."/>
            <person name="Wei X."/>
            <person name="West A."/>
            <person name="Whitehead S.L."/>
            <person name="Whiteley M.N."/>
            <person name="Wilkinson J.E."/>
            <person name="Willey D.L."/>
            <person name="Williams G."/>
            <person name="Williams L."/>
            <person name="Williamson A."/>
            <person name="Williamson H."/>
            <person name="Wilming L."/>
            <person name="Woodmansey R.L."/>
            <person name="Wray P.W."/>
            <person name="Yen J."/>
            <person name="Zhang J."/>
            <person name="Zhou J."/>
            <person name="Zoghbi H."/>
            <person name="Zorilla S."/>
            <person name="Buck D."/>
            <person name="Reinhardt R."/>
            <person name="Poustka A."/>
            <person name="Rosenthal A."/>
            <person name="Lehrach H."/>
            <person name="Meindl A."/>
            <person name="Minx P.J."/>
            <person name="Hillier L.W."/>
            <person name="Willard H.F."/>
            <person name="Wilson R.K."/>
            <person name="Waterston R.H."/>
            <person name="Rice C.M."/>
            <person name="Vaudin M."/>
            <person name="Coulson A."/>
            <person name="Nelson D.L."/>
            <person name="Weinstock G."/>
            <person name="Sulston J.E."/>
            <person name="Durbin R.M."/>
            <person name="Hubbard T."/>
            <person name="Gibbs R.A."/>
            <person name="Beck S."/>
            <person name="Rogers J."/>
            <person name="Bentley D.R."/>
        </authorList>
    </citation>
    <scope>NUCLEOTIDE SEQUENCE [LARGE SCALE GENOMIC DNA]</scope>
</reference>
<reference key="4">
    <citation type="submission" date="2005-09" db="EMBL/GenBank/DDBJ databases">
        <authorList>
            <person name="Mural R.J."/>
            <person name="Istrail S."/>
            <person name="Sutton G.G."/>
            <person name="Florea L."/>
            <person name="Halpern A.L."/>
            <person name="Mobarry C.M."/>
            <person name="Lippert R."/>
            <person name="Walenz B."/>
            <person name="Shatkay H."/>
            <person name="Dew I."/>
            <person name="Miller J.R."/>
            <person name="Flanigan M.J."/>
            <person name="Edwards N.J."/>
            <person name="Bolanos R."/>
            <person name="Fasulo D."/>
            <person name="Halldorsson B.V."/>
            <person name="Hannenhalli S."/>
            <person name="Turner R."/>
            <person name="Yooseph S."/>
            <person name="Lu F."/>
            <person name="Nusskern D.R."/>
            <person name="Shue B.C."/>
            <person name="Zheng X.H."/>
            <person name="Zhong F."/>
            <person name="Delcher A.L."/>
            <person name="Huson D.H."/>
            <person name="Kravitz S.A."/>
            <person name="Mouchard L."/>
            <person name="Reinert K."/>
            <person name="Remington K.A."/>
            <person name="Clark A.G."/>
            <person name="Waterman M.S."/>
            <person name="Eichler E.E."/>
            <person name="Adams M.D."/>
            <person name="Hunkapiller M.W."/>
            <person name="Myers E.W."/>
            <person name="Venter J.C."/>
        </authorList>
    </citation>
    <scope>NUCLEOTIDE SEQUENCE [LARGE SCALE GENOMIC DNA]</scope>
</reference>
<reference key="5">
    <citation type="journal article" date="2004" name="Genome Res.">
        <title>The status, quality, and expansion of the NIH full-length cDNA project: the Mammalian Gene Collection (MGC).</title>
        <authorList>
            <consortium name="The MGC Project Team"/>
        </authorList>
    </citation>
    <scope>NUCLEOTIDE SEQUENCE [LARGE SCALE MRNA]</scope>
    <scope>VARIANT VAL-508</scope>
    <source>
        <tissue>Lung</tissue>
    </source>
</reference>
<reference key="6">
    <citation type="journal article" date="2011" name="Sci. Signal.">
        <title>System-wide temporal characterization of the proteome and phosphoproteome of human embryonic stem cell differentiation.</title>
        <authorList>
            <person name="Rigbolt K.T."/>
            <person name="Prokhorova T.A."/>
            <person name="Akimov V."/>
            <person name="Henningsen J."/>
            <person name="Johansen P.T."/>
            <person name="Kratchmarova I."/>
            <person name="Kassem M."/>
            <person name="Mann M."/>
            <person name="Olsen J.V."/>
            <person name="Blagoev B."/>
        </authorList>
    </citation>
    <scope>PHOSPHORYLATION [LARGE SCALE ANALYSIS] AT THR-606 AND SER-618</scope>
    <scope>IDENTIFICATION BY MASS SPECTROMETRY [LARGE SCALE ANALYSIS]</scope>
</reference>
<reference key="7">
    <citation type="journal article" date="2011" name="Nature">
        <title>Exome sequencing identifies frequent mutation of the SWI/SNF complex gene PBRM1 in renal carcinoma.</title>
        <authorList>
            <person name="Varela I."/>
            <person name="Tarpey P."/>
            <person name="Raine K."/>
            <person name="Huang D."/>
            <person name="Ong C.K."/>
            <person name="Stephens P."/>
            <person name="Davies H."/>
            <person name="Jones D."/>
            <person name="Lin M.L."/>
            <person name="Teague J."/>
            <person name="Bignell G."/>
            <person name="Butler A."/>
            <person name="Cho J."/>
            <person name="Dalgliesh G.L."/>
            <person name="Galappaththige D."/>
            <person name="Greenman C."/>
            <person name="Hardy C."/>
            <person name="Jia M."/>
            <person name="Latimer C."/>
            <person name="Lau K.W."/>
            <person name="Marshall J."/>
            <person name="McLaren S."/>
            <person name="Menzies A."/>
            <person name="Mudie L."/>
            <person name="Stebbings L."/>
            <person name="Largaespada D.A."/>
            <person name="Wessels L.F.A."/>
            <person name="Richard S."/>
            <person name="Kahnoski R.J."/>
            <person name="Anema J."/>
            <person name="Tuveson D.A."/>
            <person name="Perez-Mancera P.A."/>
            <person name="Mustonen V."/>
            <person name="Fischer A."/>
            <person name="Adams D.J."/>
            <person name="Rust A."/>
            <person name="Chan-On W."/>
            <person name="Subimerb C."/>
            <person name="Dykema K."/>
            <person name="Furge K."/>
            <person name="Campbell P.J."/>
            <person name="Teh B.T."/>
            <person name="Stratton M.R."/>
            <person name="Futreal P.A."/>
        </authorList>
    </citation>
    <scope>VARIANT LYS-356</scope>
</reference>
<evidence type="ECO:0000255" key="1"/>
<evidence type="ECO:0000269" key="2">
    <source>
    </source>
</evidence>
<evidence type="ECO:0000269" key="3">
    <source>
    </source>
</evidence>
<evidence type="ECO:0000269" key="4">
    <source>
    </source>
</evidence>
<evidence type="ECO:0000305" key="5"/>
<evidence type="ECO:0000312" key="6">
    <source>
        <dbReference type="HGNC" id="HGNC:11061"/>
    </source>
</evidence>
<evidence type="ECO:0007744" key="7">
    <source>
    </source>
</evidence>
<name>CTR3_HUMAN</name>
<sequence>MPWQAFRRFGQKLVRRRTLESGMAETRLARCLSTLDLVALGVGSTLGAGVYVLAGEVAKDKAGPSIVICFLVAALSSVLAGLCYAEFGARVPRSGSAYLYSYVTVGELWAFTTGWNLILSYVIGTASVARAWSSAFDNLIGNHISKTLQGSIALHVPHVLAEYPDFFALGLVLLLTGLLALGASESALVTKVFTGVNLLVLGFVMISGFVKGDVHNWKLTEEDYELAMAELNDTYSLGPLGSGGFVPFGFEGILRGAATCFYAFVGFDCIATTGEEAQNPQRSIPMGIVISLSVCFLAYFAVSSALTLMMPYYQLQPESPLPEAFLYIGWAPARYVVAVGSLCALSTSLLGSMFPMPRVIYAMAEDGLLFRVLARIHTGTRTPIIATVVSGIIAAFMAFLFKLTDLVDLMSIGTLLAYSLVSICVLILRYQPDQETKTGEEVELQEEAITTESEKLTLWGLFFPLNSIPTPLSGQIVYVCSSLLAVLLTALCLVLAQWSVPLLSGDLLWTAVVVLLLLLIIGIIVVIWRQPQSSTPLHFKVPALPLLPLMSIFVNIYLMMQMTAGTWARFGVWMLIGFAIYFGYGIQHSLEEIKSNQPSRKSRAKTVDLDPGTLYVHSV</sequence>
<protein>
    <recommendedName>
        <fullName evidence="5">Cationic amino acid transporter 3</fullName>
        <shortName>CAT-3</shortName>
        <shortName>CAT3</shortName>
    </recommendedName>
    <alternativeName>
        <fullName>Cationic amino acid transporter y+</fullName>
    </alternativeName>
    <alternativeName>
        <fullName>Solute carrier family 7 member 3</fullName>
    </alternativeName>
</protein>
<accession>Q8WY07</accession>
<accession>D3DVU7</accession>
<accession>Q5JQR2</accession>
<accession>Q8N185</accession>
<accession>Q8NCA7</accession>
<accession>Q96SZ7</accession>
<feature type="chain" id="PRO_0000054266" description="Cationic amino acid transporter 3">
    <location>
        <begin position="1"/>
        <end position="619"/>
    </location>
</feature>
<feature type="topological domain" description="Cytoplasmic" evidence="1">
    <location>
        <begin position="1"/>
        <end position="36"/>
    </location>
</feature>
<feature type="transmembrane region" description="Helical; Name=1" evidence="1">
    <location>
        <begin position="37"/>
        <end position="57"/>
    </location>
</feature>
<feature type="topological domain" description="Extracellular" evidence="1">
    <location>
        <begin position="58"/>
        <end position="61"/>
    </location>
</feature>
<feature type="transmembrane region" description="Helical; Name=2" evidence="1">
    <location>
        <begin position="62"/>
        <end position="82"/>
    </location>
</feature>
<feature type="topological domain" description="Cytoplasmic" evidence="1">
    <location>
        <begin position="83"/>
        <end position="107"/>
    </location>
</feature>
<feature type="transmembrane region" description="Helical; Name=3" evidence="1">
    <location>
        <begin position="108"/>
        <end position="128"/>
    </location>
</feature>
<feature type="topological domain" description="Extracellular" evidence="1">
    <location>
        <begin position="129"/>
        <end position="162"/>
    </location>
</feature>
<feature type="transmembrane region" description="Helical; Name=4" evidence="1">
    <location>
        <begin position="163"/>
        <end position="183"/>
    </location>
</feature>
<feature type="topological domain" description="Cytoplasmic" evidence="1">
    <location>
        <begin position="184"/>
        <end position="191"/>
    </location>
</feature>
<feature type="transmembrane region" description="Helical; Name=5" evidence="1">
    <location>
        <begin position="192"/>
        <end position="212"/>
    </location>
</feature>
<feature type="topological domain" description="Extracellular" evidence="1">
    <location>
        <begin position="213"/>
        <end position="233"/>
    </location>
</feature>
<feature type="transmembrane region" description="Helical; Name=6" evidence="1">
    <location>
        <begin position="234"/>
        <end position="254"/>
    </location>
</feature>
<feature type="topological domain" description="Cytoplasmic" evidence="1">
    <location>
        <begin position="255"/>
        <end position="285"/>
    </location>
</feature>
<feature type="transmembrane region" description="Helical; Name=7" evidence="1">
    <location>
        <begin position="286"/>
        <end position="306"/>
    </location>
</feature>
<feature type="topological domain" description="Extracellular" evidence="1">
    <location>
        <begin position="307"/>
        <end position="335"/>
    </location>
</feature>
<feature type="transmembrane region" description="Helical; Name=8" evidence="1">
    <location>
        <begin position="336"/>
        <end position="356"/>
    </location>
</feature>
<feature type="topological domain" description="Cytoplasmic" evidence="1">
    <location>
        <begin position="357"/>
        <end position="382"/>
    </location>
</feature>
<feature type="transmembrane region" description="Helical; Name=9" evidence="1">
    <location>
        <begin position="383"/>
        <end position="403"/>
    </location>
</feature>
<feature type="topological domain" description="Extracellular" evidence="1">
    <location>
        <begin position="404"/>
        <end position="406"/>
    </location>
</feature>
<feature type="transmembrane region" description="Helical; Name=10" evidence="1">
    <location>
        <begin position="407"/>
        <end position="427"/>
    </location>
</feature>
<feature type="topological domain" description="Cytoplasmic" evidence="1">
    <location>
        <begin position="428"/>
        <end position="475"/>
    </location>
</feature>
<feature type="transmembrane region" description="Helical; Name=11" evidence="1">
    <location>
        <begin position="476"/>
        <end position="496"/>
    </location>
</feature>
<feature type="topological domain" description="Extracellular" evidence="1">
    <location>
        <begin position="497"/>
        <end position="506"/>
    </location>
</feature>
<feature type="transmembrane region" description="Helical; Name=12" evidence="1">
    <location>
        <begin position="507"/>
        <end position="527"/>
    </location>
</feature>
<feature type="topological domain" description="Cytoplasmic" evidence="1">
    <location>
        <begin position="528"/>
        <end position="540"/>
    </location>
</feature>
<feature type="transmembrane region" description="Helical; Name=13" evidence="1">
    <location>
        <begin position="541"/>
        <end position="561"/>
    </location>
</feature>
<feature type="topological domain" description="Extracellular" evidence="1">
    <location>
        <begin position="562"/>
        <end position="569"/>
    </location>
</feature>
<feature type="transmembrane region" description="Helical; Name=14" evidence="1">
    <location>
        <begin position="570"/>
        <end position="590"/>
    </location>
</feature>
<feature type="topological domain" description="Cytoplasmic" evidence="1">
    <location>
        <begin position="591"/>
        <end position="619"/>
    </location>
</feature>
<feature type="modified residue" description="Phosphothreonine" evidence="7">
    <location>
        <position position="606"/>
    </location>
</feature>
<feature type="modified residue" description="Phosphoserine" evidence="7">
    <location>
        <position position="618"/>
    </location>
</feature>
<feature type="glycosylation site" description="N-linked (GlcNAc...) asparagine" evidence="1">
    <location>
        <position position="232"/>
    </location>
</feature>
<feature type="sequence variant" id="VAR_064754" description="Found in a renal cell carcinoma sample; somatic mutation." evidence="4">
    <original>M</original>
    <variation>K</variation>
    <location>
        <position position="356"/>
    </location>
</feature>
<feature type="sequence variant" id="VAR_048154" description="In dbSNP:rs6525447." evidence="3">
    <original>L</original>
    <variation>V</variation>
    <location>
        <position position="508"/>
    </location>
</feature>
<feature type="sequence conflict" description="In Ref. 5; AAH33816." evidence="5" ref="5">
    <original>K</original>
    <variation>R</variation>
    <location>
        <position position="191"/>
    </location>
</feature>
<feature type="sequence conflict" description="In Ref. 2; BAC11253." evidence="5" ref="2">
    <original>E</original>
    <variation>G</variation>
    <location>
        <position position="221"/>
    </location>
</feature>
<dbReference type="EMBL" id="AF320612">
    <property type="protein sequence ID" value="AAL37184.1"/>
    <property type="molecule type" value="mRNA"/>
</dbReference>
<dbReference type="EMBL" id="AK027447">
    <property type="protein sequence ID" value="BAB55118.1"/>
    <property type="status" value="ALT_INIT"/>
    <property type="molecule type" value="mRNA"/>
</dbReference>
<dbReference type="EMBL" id="AK074865">
    <property type="protein sequence ID" value="BAC11253.1"/>
    <property type="molecule type" value="mRNA"/>
</dbReference>
<dbReference type="EMBL" id="AK075014">
    <property type="protein sequence ID" value="BAC11353.1"/>
    <property type="molecule type" value="mRNA"/>
</dbReference>
<dbReference type="EMBL" id="AL627071">
    <property type="status" value="NOT_ANNOTATED_CDS"/>
    <property type="molecule type" value="Genomic_DNA"/>
</dbReference>
<dbReference type="EMBL" id="CH471132">
    <property type="protein sequence ID" value="EAX05329.1"/>
    <property type="molecule type" value="Genomic_DNA"/>
</dbReference>
<dbReference type="EMBL" id="CH471132">
    <property type="protein sequence ID" value="EAX05330.1"/>
    <property type="molecule type" value="Genomic_DNA"/>
</dbReference>
<dbReference type="EMBL" id="BC033816">
    <property type="protein sequence ID" value="AAH33816.1"/>
    <property type="molecule type" value="mRNA"/>
</dbReference>
<dbReference type="CCDS" id="CCDS14404.1"/>
<dbReference type="RefSeq" id="NP_001041629.1">
    <property type="nucleotide sequence ID" value="NM_001048164.3"/>
</dbReference>
<dbReference type="RefSeq" id="NP_116192.4">
    <property type="nucleotide sequence ID" value="NM_032803.5"/>
</dbReference>
<dbReference type="RefSeq" id="XP_016885401.1">
    <property type="nucleotide sequence ID" value="XM_017029912.1"/>
</dbReference>
<dbReference type="RefSeq" id="XP_047298554.1">
    <property type="nucleotide sequence ID" value="XM_047442598.1"/>
</dbReference>
<dbReference type="SMR" id="Q8WY07"/>
<dbReference type="BioGRID" id="124329">
    <property type="interactions" value="53"/>
</dbReference>
<dbReference type="FunCoup" id="Q8WY07">
    <property type="interactions" value="420"/>
</dbReference>
<dbReference type="IntAct" id="Q8WY07">
    <property type="interactions" value="51"/>
</dbReference>
<dbReference type="STRING" id="9606.ENSP00000363417"/>
<dbReference type="ChEMBL" id="CHEMBL5209633"/>
<dbReference type="DrugBank" id="DB00125">
    <property type="generic name" value="Arginine"/>
</dbReference>
<dbReference type="DrugBank" id="DB13146">
    <property type="generic name" value="Fluciclovine (18F)"/>
</dbReference>
<dbReference type="DrugBank" id="DB00123">
    <property type="generic name" value="Lysine"/>
</dbReference>
<dbReference type="TCDB" id="2.A.3.3.10">
    <property type="family name" value="the amino acid-polyamine-organocation (apc) family"/>
</dbReference>
<dbReference type="GlyCosmos" id="Q8WY07">
    <property type="glycosylation" value="1 site, No reported glycans"/>
</dbReference>
<dbReference type="GlyGen" id="Q8WY07">
    <property type="glycosylation" value="2 sites"/>
</dbReference>
<dbReference type="iPTMnet" id="Q8WY07"/>
<dbReference type="PhosphoSitePlus" id="Q8WY07"/>
<dbReference type="BioMuta" id="SLC7A3"/>
<dbReference type="DMDM" id="41016908"/>
<dbReference type="jPOST" id="Q8WY07"/>
<dbReference type="MassIVE" id="Q8WY07"/>
<dbReference type="PaxDb" id="9606-ENSP00000363417"/>
<dbReference type="PeptideAtlas" id="Q8WY07"/>
<dbReference type="ProteomicsDB" id="75116"/>
<dbReference type="Antibodypedia" id="586">
    <property type="antibodies" value="68 antibodies from 19 providers"/>
</dbReference>
<dbReference type="DNASU" id="84889"/>
<dbReference type="Ensembl" id="ENST00000298085.4">
    <property type="protein sequence ID" value="ENSP00000298085.4"/>
    <property type="gene ID" value="ENSG00000165349.12"/>
</dbReference>
<dbReference type="Ensembl" id="ENST00000374299.8">
    <property type="protein sequence ID" value="ENSP00000363417.3"/>
    <property type="gene ID" value="ENSG00000165349.12"/>
</dbReference>
<dbReference type="GeneID" id="84889"/>
<dbReference type="KEGG" id="hsa:84889"/>
<dbReference type="MANE-Select" id="ENST00000374299.8">
    <property type="protein sequence ID" value="ENSP00000363417.3"/>
    <property type="RefSeq nucleotide sequence ID" value="NM_032803.6"/>
    <property type="RefSeq protein sequence ID" value="NP_116192.4"/>
</dbReference>
<dbReference type="UCSC" id="uc004dyn.4">
    <property type="organism name" value="human"/>
</dbReference>
<dbReference type="AGR" id="HGNC:11061"/>
<dbReference type="CTD" id="84889"/>
<dbReference type="DisGeNET" id="84889"/>
<dbReference type="GeneCards" id="SLC7A3"/>
<dbReference type="HGNC" id="HGNC:11061">
    <property type="gene designation" value="SLC7A3"/>
</dbReference>
<dbReference type="HPA" id="ENSG00000165349">
    <property type="expression patterns" value="Tissue enhanced (lymphoid)"/>
</dbReference>
<dbReference type="MalaCards" id="SLC7A3"/>
<dbReference type="MIM" id="300443">
    <property type="type" value="gene"/>
</dbReference>
<dbReference type="neXtProt" id="NX_Q8WY07"/>
<dbReference type="OpenTargets" id="ENSG00000165349"/>
<dbReference type="PharmGKB" id="PA35921"/>
<dbReference type="VEuPathDB" id="HostDB:ENSG00000165349"/>
<dbReference type="eggNOG" id="KOG1286">
    <property type="taxonomic scope" value="Eukaryota"/>
</dbReference>
<dbReference type="GeneTree" id="ENSGT00940000154651"/>
<dbReference type="HOGENOM" id="CLU_007946_15_7_1"/>
<dbReference type="InParanoid" id="Q8WY07"/>
<dbReference type="OMA" id="WQLTMIS"/>
<dbReference type="OrthoDB" id="3900342at2759"/>
<dbReference type="PAN-GO" id="Q8WY07">
    <property type="GO annotations" value="5 GO annotations based on evolutionary models"/>
</dbReference>
<dbReference type="PhylomeDB" id="Q8WY07"/>
<dbReference type="TreeFam" id="TF315212"/>
<dbReference type="PathwayCommons" id="Q8WY07"/>
<dbReference type="Reactome" id="R-HSA-352230">
    <property type="pathway name" value="Amino acid transport across the plasma membrane"/>
</dbReference>
<dbReference type="SignaLink" id="Q8WY07"/>
<dbReference type="BioGRID-ORCS" id="84889">
    <property type="hits" value="19 hits in 775 CRISPR screens"/>
</dbReference>
<dbReference type="GeneWiki" id="SLC7A3"/>
<dbReference type="GenomeRNAi" id="84889"/>
<dbReference type="Pharos" id="Q8WY07">
    <property type="development level" value="Tbio"/>
</dbReference>
<dbReference type="PRO" id="PR:Q8WY07"/>
<dbReference type="Proteomes" id="UP000005640">
    <property type="component" value="Chromosome X"/>
</dbReference>
<dbReference type="RNAct" id="Q8WY07">
    <property type="molecule type" value="protein"/>
</dbReference>
<dbReference type="Bgee" id="ENSG00000165349">
    <property type="expression patterns" value="Expressed in cauda epididymis and 87 other cell types or tissues"/>
</dbReference>
<dbReference type="GO" id="GO:0005886">
    <property type="term" value="C:plasma membrane"/>
    <property type="evidence" value="ECO:0000314"/>
    <property type="project" value="ARUK-UCL"/>
</dbReference>
<dbReference type="GO" id="GO:0015171">
    <property type="term" value="F:amino acid transmembrane transporter activity"/>
    <property type="evidence" value="ECO:0000318"/>
    <property type="project" value="GO_Central"/>
</dbReference>
<dbReference type="GO" id="GO:0061459">
    <property type="term" value="F:L-arginine transmembrane transporter activity"/>
    <property type="evidence" value="ECO:0000314"/>
    <property type="project" value="ARUK-UCL"/>
</dbReference>
<dbReference type="GO" id="GO:0015189">
    <property type="term" value="F:L-lysine transmembrane transporter activity"/>
    <property type="evidence" value="ECO:0000314"/>
    <property type="project" value="ARUK-UCL"/>
</dbReference>
<dbReference type="GO" id="GO:0000064">
    <property type="term" value="F:L-ornithine transmembrane transporter activity"/>
    <property type="evidence" value="ECO:0000314"/>
    <property type="project" value="ARUK-UCL"/>
</dbReference>
<dbReference type="GO" id="GO:0006865">
    <property type="term" value="P:amino acid transport"/>
    <property type="evidence" value="ECO:0000318"/>
    <property type="project" value="GO_Central"/>
</dbReference>
<dbReference type="GO" id="GO:0097638">
    <property type="term" value="P:L-arginine import across plasma membrane"/>
    <property type="evidence" value="ECO:0000314"/>
    <property type="project" value="ARUK-UCL"/>
</dbReference>
<dbReference type="GO" id="GO:0097639">
    <property type="term" value="P:L-lysine import across plasma membrane"/>
    <property type="evidence" value="ECO:0000314"/>
    <property type="project" value="ARUK-UCL"/>
</dbReference>
<dbReference type="GO" id="GO:0097640">
    <property type="term" value="P:L-ornithine import across plasma membrane"/>
    <property type="evidence" value="ECO:0000314"/>
    <property type="project" value="ARUK-UCL"/>
</dbReference>
<dbReference type="GO" id="GO:0150104">
    <property type="term" value="P:transport across blood-brain barrier"/>
    <property type="evidence" value="ECO:0000303"/>
    <property type="project" value="ARUK-UCL"/>
</dbReference>
<dbReference type="FunFam" id="1.20.1740.10:FF:000024">
    <property type="entry name" value="High affinity cationic amino acid transporter 1"/>
    <property type="match status" value="1"/>
</dbReference>
<dbReference type="FunFam" id="1.20.1740.10:FF:000009">
    <property type="entry name" value="Low affinity cationic amino acid transporter 2"/>
    <property type="match status" value="1"/>
</dbReference>
<dbReference type="Gene3D" id="1.20.1740.10">
    <property type="entry name" value="Amino acid/polyamine transporter I"/>
    <property type="match status" value="2"/>
</dbReference>
<dbReference type="InterPro" id="IPR002293">
    <property type="entry name" value="AA/rel_permease1"/>
</dbReference>
<dbReference type="InterPro" id="IPR004755">
    <property type="entry name" value="Cat_AA_permease"/>
</dbReference>
<dbReference type="InterPro" id="IPR029485">
    <property type="entry name" value="CAT_C"/>
</dbReference>
<dbReference type="NCBIfam" id="TIGR00906">
    <property type="entry name" value="2A0303"/>
    <property type="match status" value="1"/>
</dbReference>
<dbReference type="PANTHER" id="PTHR43243:SF20">
    <property type="entry name" value="CATIONIC AMINO ACID TRANSPORTER 3"/>
    <property type="match status" value="1"/>
</dbReference>
<dbReference type="PANTHER" id="PTHR43243">
    <property type="entry name" value="INNER MEMBRANE TRANSPORTER YGJI-RELATED"/>
    <property type="match status" value="1"/>
</dbReference>
<dbReference type="Pfam" id="PF13520">
    <property type="entry name" value="AA_permease_2"/>
    <property type="match status" value="1"/>
</dbReference>
<dbReference type="Pfam" id="PF13906">
    <property type="entry name" value="AA_permease_C"/>
    <property type="match status" value="1"/>
</dbReference>
<dbReference type="PIRSF" id="PIRSF006060">
    <property type="entry name" value="AA_transporter"/>
    <property type="match status" value="1"/>
</dbReference>